<protein>
    <recommendedName>
        <fullName evidence="1">Pyrimidine-specific ribonucleoside hydrolase RihA</fullName>
        <ecNumber evidence="1">3.2.-.-</ecNumber>
    </recommendedName>
    <alternativeName>
        <fullName evidence="1">Cytidine/uridine-specific hydrolase</fullName>
    </alternativeName>
</protein>
<organism>
    <name type="scientific">Escherichia coli O1:K1 / APEC</name>
    <dbReference type="NCBI Taxonomy" id="405955"/>
    <lineage>
        <taxon>Bacteria</taxon>
        <taxon>Pseudomonadati</taxon>
        <taxon>Pseudomonadota</taxon>
        <taxon>Gammaproteobacteria</taxon>
        <taxon>Enterobacterales</taxon>
        <taxon>Enterobacteriaceae</taxon>
        <taxon>Escherichia</taxon>
    </lineage>
</organism>
<name>RIHA_ECOK1</name>
<feature type="chain" id="PRO_1000024394" description="Pyrimidine-specific ribonucleoside hydrolase RihA">
    <location>
        <begin position="1"/>
        <end position="311"/>
    </location>
</feature>
<feature type="active site" evidence="1">
    <location>
        <position position="240"/>
    </location>
</feature>
<gene>
    <name evidence="1" type="primary">rihA</name>
    <name type="ordered locus">Ecok1_05650</name>
    <name type="ORF">APECO1_1412</name>
</gene>
<sequence>MALPILLDCDPGHDDAIAIVLALASPELDVKAITSSAGNQTPEKTLRNVLRMLTLLNRTDIPVASGAVKPLMRNLIIADNVHGESGLDGPALPEPTFAPQNCTAVELMAKTLRESEEPVTIVSTGPQTNVALLLNSHPELHSKIARIVIMGGAMGLGNWTPAAEFNIYVDPEAAEIVFQSGIPVVMAGLDVTHKAQIHVEDTERFRAIGNPVSTIVAELLDFFLEYHKDEKWGFVGAPLHDPCTIAWLLKPELFTTVERWVGVETQGKYTQGMTVVDYYYLTGNKPNATVMVDVDRQGFVDLLADRLKFYA</sequence>
<keyword id="KW-0326">Glycosidase</keyword>
<keyword id="KW-0378">Hydrolase</keyword>
<keyword id="KW-1185">Reference proteome</keyword>
<accession>A1A8R9</accession>
<dbReference type="EC" id="3.2.-.-" evidence="1"/>
<dbReference type="EMBL" id="CP000468">
    <property type="protein sequence ID" value="ABJ00059.1"/>
    <property type="molecule type" value="Genomic_DNA"/>
</dbReference>
<dbReference type="RefSeq" id="WP_001207539.1">
    <property type="nucleotide sequence ID" value="NZ_CADILS010000006.1"/>
</dbReference>
<dbReference type="SMR" id="A1A8R9"/>
<dbReference type="KEGG" id="ecv:APECO1_1412"/>
<dbReference type="HOGENOM" id="CLU_036838_2_0_6"/>
<dbReference type="Proteomes" id="UP000008216">
    <property type="component" value="Chromosome"/>
</dbReference>
<dbReference type="GO" id="GO:0005829">
    <property type="term" value="C:cytosol"/>
    <property type="evidence" value="ECO:0007669"/>
    <property type="project" value="TreeGrafter"/>
</dbReference>
<dbReference type="GO" id="GO:0008477">
    <property type="term" value="F:purine nucleosidase activity"/>
    <property type="evidence" value="ECO:0007669"/>
    <property type="project" value="TreeGrafter"/>
</dbReference>
<dbReference type="GO" id="GO:0045437">
    <property type="term" value="F:uridine nucleosidase activity"/>
    <property type="evidence" value="ECO:0007669"/>
    <property type="project" value="InterPro"/>
</dbReference>
<dbReference type="GO" id="GO:0015949">
    <property type="term" value="P:nucleobase-containing small molecule interconversion"/>
    <property type="evidence" value="ECO:0007669"/>
    <property type="project" value="InterPro"/>
</dbReference>
<dbReference type="GO" id="GO:0006152">
    <property type="term" value="P:purine nucleoside catabolic process"/>
    <property type="evidence" value="ECO:0007669"/>
    <property type="project" value="TreeGrafter"/>
</dbReference>
<dbReference type="GO" id="GO:0006206">
    <property type="term" value="P:pyrimidine nucleobase metabolic process"/>
    <property type="evidence" value="ECO:0007669"/>
    <property type="project" value="UniProtKB-UniRule"/>
</dbReference>
<dbReference type="CDD" id="cd02651">
    <property type="entry name" value="nuc_hydro_IU_UC_XIUA"/>
    <property type="match status" value="1"/>
</dbReference>
<dbReference type="FunFam" id="3.90.245.10:FF:000001">
    <property type="entry name" value="Pyrimidine-specific ribonucleoside hydrolase RihA"/>
    <property type="match status" value="1"/>
</dbReference>
<dbReference type="Gene3D" id="3.90.245.10">
    <property type="entry name" value="Ribonucleoside hydrolase-like"/>
    <property type="match status" value="1"/>
</dbReference>
<dbReference type="HAMAP" id="MF_01431">
    <property type="entry name" value="Pyrim_hydro_RihA"/>
    <property type="match status" value="1"/>
</dbReference>
<dbReference type="InterPro" id="IPR015910">
    <property type="entry name" value="I/U_nuclsd_hydro_CS"/>
</dbReference>
<dbReference type="InterPro" id="IPR001910">
    <property type="entry name" value="Inosine/uridine_hydrolase_dom"/>
</dbReference>
<dbReference type="InterPro" id="IPR023186">
    <property type="entry name" value="IUNH"/>
</dbReference>
<dbReference type="InterPro" id="IPR022975">
    <property type="entry name" value="Pyrim_hydro_RihA"/>
</dbReference>
<dbReference type="InterPro" id="IPR036452">
    <property type="entry name" value="Ribo_hydro-like"/>
</dbReference>
<dbReference type="NCBIfam" id="NF007761">
    <property type="entry name" value="PRK10443.1"/>
    <property type="match status" value="1"/>
</dbReference>
<dbReference type="PANTHER" id="PTHR12304">
    <property type="entry name" value="INOSINE-URIDINE PREFERRING NUCLEOSIDE HYDROLASE"/>
    <property type="match status" value="1"/>
</dbReference>
<dbReference type="PANTHER" id="PTHR12304:SF4">
    <property type="entry name" value="URIDINE NUCLEOSIDASE"/>
    <property type="match status" value="1"/>
</dbReference>
<dbReference type="Pfam" id="PF01156">
    <property type="entry name" value="IU_nuc_hydro"/>
    <property type="match status" value="1"/>
</dbReference>
<dbReference type="SUPFAM" id="SSF53590">
    <property type="entry name" value="Nucleoside hydrolase"/>
    <property type="match status" value="1"/>
</dbReference>
<dbReference type="PROSITE" id="PS01247">
    <property type="entry name" value="IUNH"/>
    <property type="match status" value="1"/>
</dbReference>
<evidence type="ECO:0000255" key="1">
    <source>
        <dbReference type="HAMAP-Rule" id="MF_01431"/>
    </source>
</evidence>
<reference key="1">
    <citation type="journal article" date="2007" name="J. Bacteriol.">
        <title>The genome sequence of avian pathogenic Escherichia coli strain O1:K1:H7 shares strong similarities with human extraintestinal pathogenic E. coli genomes.</title>
        <authorList>
            <person name="Johnson T.J."/>
            <person name="Kariyawasam S."/>
            <person name="Wannemuehler Y."/>
            <person name="Mangiamele P."/>
            <person name="Johnson S.J."/>
            <person name="Doetkott C."/>
            <person name="Skyberg J.A."/>
            <person name="Lynne A.M."/>
            <person name="Johnson J.R."/>
            <person name="Nolan L.K."/>
        </authorList>
    </citation>
    <scope>NUCLEOTIDE SEQUENCE [LARGE SCALE GENOMIC DNA]</scope>
</reference>
<comment type="function">
    <text evidence="1">Hydrolyzes with equal efficiency cytidine or uridine to ribose and cytosine or uracil, respectively.</text>
</comment>
<comment type="similarity">
    <text evidence="1">Belongs to the IUNH family. RihA subfamily.</text>
</comment>
<proteinExistence type="inferred from homology"/>